<proteinExistence type="inferred from homology"/>
<sequence>MGSTGEPDRKRRLSSSVAPGGGAPVSPAKRLAVAPTSEDKKLDFTVLKYKNQKLSEQLEAHKFEYRALENKFAGLKEKQRTHNETLSLVNSSWEQLVADLKSRSFCKSGSPNSSPGSGHNNVQKDGTCAPIERDTLRSLVESGATESSGCLPGCHLGSDAPPLHLSTANALGDIFFPSSDLLQANEECALAALTKLPENDRSKQLQSTSSNLLSSLNNVVQALSNLQLKHKQLAEDYQNQRDSSARKRAEHRRLKEELASAASELEETNYKLAALKAQRDNTQGARIPYPTLGNKSMPEDKVRDKQREMQDLEATHKELSELISKRLVEIKRLHEERIEILNKIATFQNILMDFKSIRSSKAFQLVNDRLQKSQAELDHYQTLLEKLQVDKDKFVWQERQFNLKVDLAEIPERVSTYCESSIADLKKDIQKLRDEKNMLILKLEEASREPGRNQVITKFKALVSSIPREMGAMQSEMTKHKEASLELNSLRAEVHSLSRILSRKERDNEEASCRSARAGSDITQLQSVISDLKQTNKELKLFADMYKRESTDSREIMESRDREFLEWAHVHALKSSLDESKLEQRVKAANEAEAITQQRLATAEAEIAESGQKLGTSRKDLVSLSHMLKSKQEECEAYRVEVECIGQAYEDIQAQNQQLLQQIIERDDDNTKIFMEGVKAKQTQDALHLETYSLRRNLQQESSLMDLYNQKIVSLEDQLKMWSDRVGKLQEDGWQQSVSLSNYQRKLVDVHRDAQKLMQSLDGIQANVGSSRLEVADLLIELEKERFSKKRIEDDLEVMSRKASSLRAKARESAVLEKLRHEVKEYRGILKCGICHDRQKEVVITKCYHLFCNQCIQKSLGNRQRRCPSCSLSFGANDVKPIYI</sequence>
<reference key="1">
    <citation type="journal article" date="2005" name="PLoS Biol.">
        <title>The genomes of Oryza sativa: a history of duplications.</title>
        <authorList>
            <person name="Yu J."/>
            <person name="Wang J."/>
            <person name="Lin W."/>
            <person name="Li S."/>
            <person name="Li H."/>
            <person name="Zhou J."/>
            <person name="Ni P."/>
            <person name="Dong W."/>
            <person name="Hu S."/>
            <person name="Zeng C."/>
            <person name="Zhang J."/>
            <person name="Zhang Y."/>
            <person name="Li R."/>
            <person name="Xu Z."/>
            <person name="Li S."/>
            <person name="Li X."/>
            <person name="Zheng H."/>
            <person name="Cong L."/>
            <person name="Lin L."/>
            <person name="Yin J."/>
            <person name="Geng J."/>
            <person name="Li G."/>
            <person name="Shi J."/>
            <person name="Liu J."/>
            <person name="Lv H."/>
            <person name="Li J."/>
            <person name="Wang J."/>
            <person name="Deng Y."/>
            <person name="Ran L."/>
            <person name="Shi X."/>
            <person name="Wang X."/>
            <person name="Wu Q."/>
            <person name="Li C."/>
            <person name="Ren X."/>
            <person name="Wang J."/>
            <person name="Wang X."/>
            <person name="Li D."/>
            <person name="Liu D."/>
            <person name="Zhang X."/>
            <person name="Ji Z."/>
            <person name="Zhao W."/>
            <person name="Sun Y."/>
            <person name="Zhang Z."/>
            <person name="Bao J."/>
            <person name="Han Y."/>
            <person name="Dong L."/>
            <person name="Ji J."/>
            <person name="Chen P."/>
            <person name="Wu S."/>
            <person name="Liu J."/>
            <person name="Xiao Y."/>
            <person name="Bu D."/>
            <person name="Tan J."/>
            <person name="Yang L."/>
            <person name="Ye C."/>
            <person name="Zhang J."/>
            <person name="Xu J."/>
            <person name="Zhou Y."/>
            <person name="Yu Y."/>
            <person name="Zhang B."/>
            <person name="Zhuang S."/>
            <person name="Wei H."/>
            <person name="Liu B."/>
            <person name="Lei M."/>
            <person name="Yu H."/>
            <person name="Li Y."/>
            <person name="Xu H."/>
            <person name="Wei S."/>
            <person name="He X."/>
            <person name="Fang L."/>
            <person name="Zhang Z."/>
            <person name="Zhang Y."/>
            <person name="Huang X."/>
            <person name="Su Z."/>
            <person name="Tong W."/>
            <person name="Li J."/>
            <person name="Tong Z."/>
            <person name="Li S."/>
            <person name="Ye J."/>
            <person name="Wang L."/>
            <person name="Fang L."/>
            <person name="Lei T."/>
            <person name="Chen C.-S."/>
            <person name="Chen H.-C."/>
            <person name="Xu Z."/>
            <person name="Li H."/>
            <person name="Huang H."/>
            <person name="Zhang F."/>
            <person name="Xu H."/>
            <person name="Li N."/>
            <person name="Zhao C."/>
            <person name="Li S."/>
            <person name="Dong L."/>
            <person name="Huang Y."/>
            <person name="Li L."/>
            <person name="Xi Y."/>
            <person name="Qi Q."/>
            <person name="Li W."/>
            <person name="Zhang B."/>
            <person name="Hu W."/>
            <person name="Zhang Y."/>
            <person name="Tian X."/>
            <person name="Jiao Y."/>
            <person name="Liang X."/>
            <person name="Jin J."/>
            <person name="Gao L."/>
            <person name="Zheng W."/>
            <person name="Hao B."/>
            <person name="Liu S.-M."/>
            <person name="Wang W."/>
            <person name="Yuan L."/>
            <person name="Cao M."/>
            <person name="McDermott J."/>
            <person name="Samudrala R."/>
            <person name="Wang J."/>
            <person name="Wong G.K.-S."/>
            <person name="Yang H."/>
        </authorList>
    </citation>
    <scope>NUCLEOTIDE SEQUENCE [LARGE SCALE GENOMIC DNA]</scope>
    <source>
        <strain>cv. 93-11</strain>
    </source>
</reference>
<gene>
    <name type="primary">BRE1A</name>
    <name type="ORF">OsI_16895</name>
</gene>
<keyword id="KW-0156">Chromatin regulator</keyword>
<keyword id="KW-0175">Coiled coil</keyword>
<keyword id="KW-0479">Metal-binding</keyword>
<keyword id="KW-0539">Nucleus</keyword>
<keyword id="KW-1185">Reference proteome</keyword>
<keyword id="KW-0808">Transferase</keyword>
<keyword id="KW-0833">Ubl conjugation pathway</keyword>
<keyword id="KW-0862">Zinc</keyword>
<keyword id="KW-0863">Zinc-finger</keyword>
<name>BRE1A_ORYSI</name>
<comment type="function">
    <text evidence="2">E3 ubiquitin-protein ligase that monoubiquitinates H2B to form H2BK143ub1. H2BK143ub1 gives a specific tag for epigenetic transcriptional activation and is also prerequisite for H3K4me and maybe H3K79me. It thereby plays a central role in histone code and gene regulation. Forms a ubiquitin ligase complex in cooperation with the E2 enzyme UBC2/RAD6.</text>
</comment>
<comment type="catalytic activity">
    <reaction evidence="2">
        <text>S-ubiquitinyl-[E2 ubiquitin-conjugating enzyme]-L-cysteine + [acceptor protein]-L-lysine = [E2 ubiquitin-conjugating enzyme]-L-cysteine + N(6)-ubiquitinyl-[acceptor protein]-L-lysine.</text>
        <dbReference type="EC" id="2.3.2.27"/>
    </reaction>
</comment>
<comment type="pathway">
    <text>Protein modification; protein ubiquitination.</text>
</comment>
<comment type="subcellular location">
    <subcellularLocation>
        <location evidence="2">Nucleus</location>
    </subcellularLocation>
</comment>
<comment type="domain">
    <text evidence="1">The RING-type zinc finger domain mediates binding to an E2 ubiquitin-conjugating enzyme.</text>
</comment>
<comment type="similarity">
    <text evidence="6">Belongs to the BRE1 family.</text>
</comment>
<feature type="chain" id="PRO_0000293111" description="E3 ubiquitin-protein ligase BRE1-like 1">
    <location>
        <begin position="1"/>
        <end position="884"/>
    </location>
</feature>
<feature type="zinc finger region" description="RING-type" evidence="4">
    <location>
        <begin position="832"/>
        <end position="871"/>
    </location>
</feature>
<feature type="region of interest" description="Disordered" evidence="5">
    <location>
        <begin position="1"/>
        <end position="37"/>
    </location>
</feature>
<feature type="region of interest" description="Disordered" evidence="5">
    <location>
        <begin position="107"/>
        <end position="127"/>
    </location>
</feature>
<feature type="coiled-coil region" evidence="3">
    <location>
        <begin position="49"/>
        <end position="86"/>
    </location>
</feature>
<feature type="coiled-coil region" evidence="3">
    <location>
        <begin position="216"/>
        <end position="541"/>
    </location>
</feature>
<feature type="coiled-coil region" evidence="3">
    <location>
        <begin position="580"/>
        <end position="663"/>
    </location>
</feature>
<feature type="coiled-coil region" evidence="3">
    <location>
        <begin position="696"/>
        <end position="762"/>
    </location>
</feature>
<feature type="coiled-coil region" evidence="3">
    <location>
        <begin position="789"/>
        <end position="827"/>
    </location>
</feature>
<feature type="compositionally biased region" description="Low complexity" evidence="5">
    <location>
        <begin position="108"/>
        <end position="121"/>
    </location>
</feature>
<accession>A2XW69</accession>
<accession>B8ASX7</accession>
<dbReference type="EC" id="2.3.2.27" evidence="2"/>
<dbReference type="EMBL" id="CM000129">
    <property type="protein sequence ID" value="EEC77758.1"/>
    <property type="molecule type" value="Genomic_DNA"/>
</dbReference>
<dbReference type="SMR" id="A2XW69"/>
<dbReference type="STRING" id="39946.A2XW69"/>
<dbReference type="EnsemblPlants" id="BGIOSGA014597-TA">
    <property type="protein sequence ID" value="BGIOSGA014597-PA"/>
    <property type="gene ID" value="BGIOSGA014597"/>
</dbReference>
<dbReference type="Gramene" id="BGIOSGA014597-TA">
    <property type="protein sequence ID" value="BGIOSGA014597-PA"/>
    <property type="gene ID" value="BGIOSGA014597"/>
</dbReference>
<dbReference type="HOGENOM" id="CLU_002640_1_0_1"/>
<dbReference type="OMA" id="THIEIMT"/>
<dbReference type="UniPathway" id="UPA00143"/>
<dbReference type="Proteomes" id="UP000007015">
    <property type="component" value="Chromosome 4"/>
</dbReference>
<dbReference type="GO" id="GO:0033503">
    <property type="term" value="C:HULC complex"/>
    <property type="evidence" value="ECO:0007669"/>
    <property type="project" value="TreeGrafter"/>
</dbReference>
<dbReference type="GO" id="GO:0005634">
    <property type="term" value="C:nucleus"/>
    <property type="evidence" value="ECO:0007669"/>
    <property type="project" value="UniProtKB-SubCell"/>
</dbReference>
<dbReference type="GO" id="GO:0042803">
    <property type="term" value="F:protein homodimerization activity"/>
    <property type="evidence" value="ECO:0007669"/>
    <property type="project" value="EnsemblPlants"/>
</dbReference>
<dbReference type="GO" id="GO:0061630">
    <property type="term" value="F:ubiquitin protein ligase activity"/>
    <property type="evidence" value="ECO:0007669"/>
    <property type="project" value="TreeGrafter"/>
</dbReference>
<dbReference type="GO" id="GO:0008270">
    <property type="term" value="F:zinc ion binding"/>
    <property type="evidence" value="ECO:0007669"/>
    <property type="project" value="UniProtKB-KW"/>
</dbReference>
<dbReference type="GO" id="GO:0051301">
    <property type="term" value="P:cell division"/>
    <property type="evidence" value="ECO:0007669"/>
    <property type="project" value="EnsemblPlants"/>
</dbReference>
<dbReference type="GO" id="GO:0006325">
    <property type="term" value="P:chromatin organization"/>
    <property type="evidence" value="ECO:0007669"/>
    <property type="project" value="UniProtKB-KW"/>
</dbReference>
<dbReference type="GO" id="GO:0050832">
    <property type="term" value="P:defense response to fungus"/>
    <property type="evidence" value="ECO:0007669"/>
    <property type="project" value="EnsemblPlants"/>
</dbReference>
<dbReference type="GO" id="GO:0045087">
    <property type="term" value="P:innate immune response"/>
    <property type="evidence" value="ECO:0007669"/>
    <property type="project" value="EnsemblPlants"/>
</dbReference>
<dbReference type="GO" id="GO:0009965">
    <property type="term" value="P:leaf morphogenesis"/>
    <property type="evidence" value="ECO:0007669"/>
    <property type="project" value="EnsemblPlants"/>
</dbReference>
<dbReference type="GO" id="GO:0051781">
    <property type="term" value="P:positive regulation of cell division"/>
    <property type="evidence" value="ECO:0007669"/>
    <property type="project" value="EnsemblPlants"/>
</dbReference>
<dbReference type="GO" id="GO:0006513">
    <property type="term" value="P:protein monoubiquitination"/>
    <property type="evidence" value="ECO:0007669"/>
    <property type="project" value="EnsemblPlants"/>
</dbReference>
<dbReference type="GO" id="GO:0010389">
    <property type="term" value="P:regulation of G2/M transition of mitotic cell cycle"/>
    <property type="evidence" value="ECO:0007669"/>
    <property type="project" value="EnsemblPlants"/>
</dbReference>
<dbReference type="GO" id="GO:0010162">
    <property type="term" value="P:seed dormancy process"/>
    <property type="evidence" value="ECO:0007669"/>
    <property type="project" value="EnsemblPlants"/>
</dbReference>
<dbReference type="GO" id="GO:0010228">
    <property type="term" value="P:vegetative to reproductive phase transition of meristem"/>
    <property type="evidence" value="ECO:0007669"/>
    <property type="project" value="EnsemblPlants"/>
</dbReference>
<dbReference type="CDD" id="cd16499">
    <property type="entry name" value="RING-HC_Bre1-like"/>
    <property type="match status" value="1"/>
</dbReference>
<dbReference type="Gene3D" id="3.30.40.10">
    <property type="entry name" value="Zinc/RING finger domain, C3HC4 (zinc finger)"/>
    <property type="match status" value="1"/>
</dbReference>
<dbReference type="InterPro" id="IPR013956">
    <property type="entry name" value="E3_ubiquit_lig_Bre1"/>
</dbReference>
<dbReference type="InterPro" id="IPR001841">
    <property type="entry name" value="Znf_RING"/>
</dbReference>
<dbReference type="InterPro" id="IPR013083">
    <property type="entry name" value="Znf_RING/FYVE/PHD"/>
</dbReference>
<dbReference type="InterPro" id="IPR017907">
    <property type="entry name" value="Znf_RING_CS"/>
</dbReference>
<dbReference type="PANTHER" id="PTHR23163:SF0">
    <property type="entry name" value="E3 UBIQUITIN-PROTEIN LIGASE BRE1"/>
    <property type="match status" value="1"/>
</dbReference>
<dbReference type="PANTHER" id="PTHR23163">
    <property type="entry name" value="RING FINGER PROTEIN-RELATED"/>
    <property type="match status" value="1"/>
</dbReference>
<dbReference type="Pfam" id="PF13923">
    <property type="entry name" value="zf-C3HC4_2"/>
    <property type="match status" value="1"/>
</dbReference>
<dbReference type="SMART" id="SM00184">
    <property type="entry name" value="RING"/>
    <property type="match status" value="1"/>
</dbReference>
<dbReference type="SUPFAM" id="SSF57850">
    <property type="entry name" value="RING/U-box"/>
    <property type="match status" value="1"/>
</dbReference>
<dbReference type="SUPFAM" id="SSF57997">
    <property type="entry name" value="Tropomyosin"/>
    <property type="match status" value="1"/>
</dbReference>
<dbReference type="PROSITE" id="PS00518">
    <property type="entry name" value="ZF_RING_1"/>
    <property type="match status" value="1"/>
</dbReference>
<dbReference type="PROSITE" id="PS50089">
    <property type="entry name" value="ZF_RING_2"/>
    <property type="match status" value="1"/>
</dbReference>
<protein>
    <recommendedName>
        <fullName>E3 ubiquitin-protein ligase BRE1-like 1</fullName>
        <ecNumber evidence="2">2.3.2.27</ecNumber>
    </recommendedName>
    <alternativeName>
        <fullName evidence="6">RING-type E3 ubiquitin transferase BRE1-like 1</fullName>
    </alternativeName>
</protein>
<evidence type="ECO:0000250" key="1"/>
<evidence type="ECO:0000250" key="2">
    <source>
        <dbReference type="UniProtKB" id="Q8RXD6"/>
    </source>
</evidence>
<evidence type="ECO:0000255" key="3"/>
<evidence type="ECO:0000255" key="4">
    <source>
        <dbReference type="PROSITE-ProRule" id="PRU00175"/>
    </source>
</evidence>
<evidence type="ECO:0000256" key="5">
    <source>
        <dbReference type="SAM" id="MobiDB-lite"/>
    </source>
</evidence>
<evidence type="ECO:0000305" key="6"/>
<organism>
    <name type="scientific">Oryza sativa subsp. indica</name>
    <name type="common">Rice</name>
    <dbReference type="NCBI Taxonomy" id="39946"/>
    <lineage>
        <taxon>Eukaryota</taxon>
        <taxon>Viridiplantae</taxon>
        <taxon>Streptophyta</taxon>
        <taxon>Embryophyta</taxon>
        <taxon>Tracheophyta</taxon>
        <taxon>Spermatophyta</taxon>
        <taxon>Magnoliopsida</taxon>
        <taxon>Liliopsida</taxon>
        <taxon>Poales</taxon>
        <taxon>Poaceae</taxon>
        <taxon>BOP clade</taxon>
        <taxon>Oryzoideae</taxon>
        <taxon>Oryzeae</taxon>
        <taxon>Oryzinae</taxon>
        <taxon>Oryza</taxon>
        <taxon>Oryza sativa</taxon>
    </lineage>
</organism>